<organism>
    <name type="scientific">Bacillus subtilis (strain 168)</name>
    <dbReference type="NCBI Taxonomy" id="224308"/>
    <lineage>
        <taxon>Bacteria</taxon>
        <taxon>Bacillati</taxon>
        <taxon>Bacillota</taxon>
        <taxon>Bacilli</taxon>
        <taxon>Bacillales</taxon>
        <taxon>Bacillaceae</taxon>
        <taxon>Bacillus</taxon>
    </lineage>
</organism>
<feature type="chain" id="PRO_0000075998" description="D-3-phosphoglycerate dehydrogenase">
    <location>
        <begin position="1"/>
        <end position="525"/>
    </location>
</feature>
<feature type="domain" description="ACT" evidence="3">
    <location>
        <begin position="452"/>
        <end position="524"/>
    </location>
</feature>
<feature type="active site" evidence="1">
    <location>
        <position position="229"/>
    </location>
</feature>
<feature type="active site" evidence="1">
    <location>
        <position position="258"/>
    </location>
</feature>
<feature type="active site" description="Proton donor" evidence="1">
    <location>
        <position position="276"/>
    </location>
</feature>
<feature type="binding site" evidence="2">
    <location>
        <begin position="148"/>
        <end position="149"/>
    </location>
    <ligand>
        <name>NAD(+)</name>
        <dbReference type="ChEBI" id="CHEBI:57540"/>
    </ligand>
</feature>
<feature type="binding site" evidence="2">
    <location>
        <position position="168"/>
    </location>
    <ligand>
        <name>NAD(+)</name>
        <dbReference type="ChEBI" id="CHEBI:57540"/>
    </ligand>
</feature>
<feature type="binding site" evidence="1">
    <location>
        <position position="200"/>
    </location>
    <ligand>
        <name>NAD(+)</name>
        <dbReference type="ChEBI" id="CHEBI:57540"/>
    </ligand>
</feature>
<feature type="binding site" evidence="2">
    <location>
        <begin position="227"/>
        <end position="229"/>
    </location>
    <ligand>
        <name>NAD(+)</name>
        <dbReference type="ChEBI" id="CHEBI:57540"/>
    </ligand>
</feature>
<feature type="binding site" evidence="2">
    <location>
        <position position="253"/>
    </location>
    <ligand>
        <name>NAD(+)</name>
        <dbReference type="ChEBI" id="CHEBI:57540"/>
    </ligand>
</feature>
<feature type="binding site" evidence="2">
    <location>
        <begin position="276"/>
        <end position="279"/>
    </location>
    <ligand>
        <name>NAD(+)</name>
        <dbReference type="ChEBI" id="CHEBI:57540"/>
    </ligand>
</feature>
<feature type="sequence conflict" description="In Ref. 1; AAC83943 and 4; AAA67502." evidence="4" ref="1 4">
    <original>AR</original>
    <variation>RG</variation>
    <location>
        <begin position="157"/>
        <end position="158"/>
    </location>
</feature>
<reference key="1">
    <citation type="journal article" date="1996" name="Microbiology">
        <title>Sequence analysis of the Bacillus subtilis chromosome region between the serA and kdg loci cloned in a yeast artificial chromosome.</title>
        <authorList>
            <person name="Sorokin A.V."/>
            <person name="Azevedo V."/>
            <person name="Zumstein E."/>
            <person name="Galleron N."/>
            <person name="Ehrlich S.D."/>
            <person name="Serror P."/>
        </authorList>
    </citation>
    <scope>NUCLEOTIDE SEQUENCE [GENOMIC DNA]</scope>
    <source>
        <strain>168 / Marburg / ATCC 6051 / DSM 10 / JCM 1465 / NBRC 13719 / NCIMB 3610 / NRRL NRS-744 / VKM B-501</strain>
    </source>
</reference>
<reference key="2">
    <citation type="journal article" date="1997" name="Nature">
        <title>The complete genome sequence of the Gram-positive bacterium Bacillus subtilis.</title>
        <authorList>
            <person name="Kunst F."/>
            <person name="Ogasawara N."/>
            <person name="Moszer I."/>
            <person name="Albertini A.M."/>
            <person name="Alloni G."/>
            <person name="Azevedo V."/>
            <person name="Bertero M.G."/>
            <person name="Bessieres P."/>
            <person name="Bolotin A."/>
            <person name="Borchert S."/>
            <person name="Borriss R."/>
            <person name="Boursier L."/>
            <person name="Brans A."/>
            <person name="Braun M."/>
            <person name="Brignell S.C."/>
            <person name="Bron S."/>
            <person name="Brouillet S."/>
            <person name="Bruschi C.V."/>
            <person name="Caldwell B."/>
            <person name="Capuano V."/>
            <person name="Carter N.M."/>
            <person name="Choi S.-K."/>
            <person name="Codani J.-J."/>
            <person name="Connerton I.F."/>
            <person name="Cummings N.J."/>
            <person name="Daniel R.A."/>
            <person name="Denizot F."/>
            <person name="Devine K.M."/>
            <person name="Duesterhoeft A."/>
            <person name="Ehrlich S.D."/>
            <person name="Emmerson P.T."/>
            <person name="Entian K.-D."/>
            <person name="Errington J."/>
            <person name="Fabret C."/>
            <person name="Ferrari E."/>
            <person name="Foulger D."/>
            <person name="Fritz C."/>
            <person name="Fujita M."/>
            <person name="Fujita Y."/>
            <person name="Fuma S."/>
            <person name="Galizzi A."/>
            <person name="Galleron N."/>
            <person name="Ghim S.-Y."/>
            <person name="Glaser P."/>
            <person name="Goffeau A."/>
            <person name="Golightly E.J."/>
            <person name="Grandi G."/>
            <person name="Guiseppi G."/>
            <person name="Guy B.J."/>
            <person name="Haga K."/>
            <person name="Haiech J."/>
            <person name="Harwood C.R."/>
            <person name="Henaut A."/>
            <person name="Hilbert H."/>
            <person name="Holsappel S."/>
            <person name="Hosono S."/>
            <person name="Hullo M.-F."/>
            <person name="Itaya M."/>
            <person name="Jones L.-M."/>
            <person name="Joris B."/>
            <person name="Karamata D."/>
            <person name="Kasahara Y."/>
            <person name="Klaerr-Blanchard M."/>
            <person name="Klein C."/>
            <person name="Kobayashi Y."/>
            <person name="Koetter P."/>
            <person name="Koningstein G."/>
            <person name="Krogh S."/>
            <person name="Kumano M."/>
            <person name="Kurita K."/>
            <person name="Lapidus A."/>
            <person name="Lardinois S."/>
            <person name="Lauber J."/>
            <person name="Lazarevic V."/>
            <person name="Lee S.-M."/>
            <person name="Levine A."/>
            <person name="Liu H."/>
            <person name="Masuda S."/>
            <person name="Mauel C."/>
            <person name="Medigue C."/>
            <person name="Medina N."/>
            <person name="Mellado R.P."/>
            <person name="Mizuno M."/>
            <person name="Moestl D."/>
            <person name="Nakai S."/>
            <person name="Noback M."/>
            <person name="Noone D."/>
            <person name="O'Reilly M."/>
            <person name="Ogawa K."/>
            <person name="Ogiwara A."/>
            <person name="Oudega B."/>
            <person name="Park S.-H."/>
            <person name="Parro V."/>
            <person name="Pohl T.M."/>
            <person name="Portetelle D."/>
            <person name="Porwollik S."/>
            <person name="Prescott A.M."/>
            <person name="Presecan E."/>
            <person name="Pujic P."/>
            <person name="Purnelle B."/>
            <person name="Rapoport G."/>
            <person name="Rey M."/>
            <person name="Reynolds S."/>
            <person name="Rieger M."/>
            <person name="Rivolta C."/>
            <person name="Rocha E."/>
            <person name="Roche B."/>
            <person name="Rose M."/>
            <person name="Sadaie Y."/>
            <person name="Sato T."/>
            <person name="Scanlan E."/>
            <person name="Schleich S."/>
            <person name="Schroeter R."/>
            <person name="Scoffone F."/>
            <person name="Sekiguchi J."/>
            <person name="Sekowska A."/>
            <person name="Seror S.J."/>
            <person name="Serror P."/>
            <person name="Shin B.-S."/>
            <person name="Soldo B."/>
            <person name="Sorokin A."/>
            <person name="Tacconi E."/>
            <person name="Takagi T."/>
            <person name="Takahashi H."/>
            <person name="Takemaru K."/>
            <person name="Takeuchi M."/>
            <person name="Tamakoshi A."/>
            <person name="Tanaka T."/>
            <person name="Terpstra P."/>
            <person name="Tognoni A."/>
            <person name="Tosato V."/>
            <person name="Uchiyama S."/>
            <person name="Vandenbol M."/>
            <person name="Vannier F."/>
            <person name="Vassarotti A."/>
            <person name="Viari A."/>
            <person name="Wambutt R."/>
            <person name="Wedler E."/>
            <person name="Wedler H."/>
            <person name="Weitzenegger T."/>
            <person name="Winters P."/>
            <person name="Wipat A."/>
            <person name="Yamamoto H."/>
            <person name="Yamane K."/>
            <person name="Yasumoto K."/>
            <person name="Yata K."/>
            <person name="Yoshida K."/>
            <person name="Yoshikawa H.-F."/>
            <person name="Zumstein E."/>
            <person name="Yoshikawa H."/>
            <person name="Danchin A."/>
        </authorList>
    </citation>
    <scope>NUCLEOTIDE SEQUENCE [LARGE SCALE GENOMIC DNA]</scope>
    <source>
        <strain>168</strain>
    </source>
</reference>
<reference key="3">
    <citation type="journal article" date="2009" name="Microbiology">
        <title>From a consortium sequence to a unified sequence: the Bacillus subtilis 168 reference genome a decade later.</title>
        <authorList>
            <person name="Barbe V."/>
            <person name="Cruveiller S."/>
            <person name="Kunst F."/>
            <person name="Lenoble P."/>
            <person name="Meurice G."/>
            <person name="Sekowska A."/>
            <person name="Vallenet D."/>
            <person name="Wang T."/>
            <person name="Moszer I."/>
            <person name="Medigue C."/>
            <person name="Danchin A."/>
        </authorList>
    </citation>
    <scope>SEQUENCE REVISION TO 157-158</scope>
</reference>
<reference key="4">
    <citation type="journal article" date="1993" name="Mol. Microbiol.">
        <title>The organization of the Bacillus subtilis 168 chromosome region between the spoVA and serA genetic loci, based on sequence data.</title>
        <authorList>
            <person name="Sorokin A.V."/>
            <person name="Zumstein E."/>
            <person name="Azevedo V."/>
            <person name="Ehrlich S.D."/>
            <person name="Serror P."/>
        </authorList>
    </citation>
    <scope>NUCLEOTIDE SEQUENCE [GENOMIC DNA] OF 107-525</scope>
    <source>
        <strain>168 / Marburg / ATCC 6051 / DSM 10 / JCM 1465 / NBRC 13719 / NCIMB 3610 / NRRL NRS-744 / VKM B-501</strain>
    </source>
</reference>
<keyword id="KW-0028">Amino-acid biosynthesis</keyword>
<keyword id="KW-0520">NAD</keyword>
<keyword id="KW-0560">Oxidoreductase</keyword>
<keyword id="KW-1185">Reference proteome</keyword>
<keyword id="KW-0718">Serine biosynthesis</keyword>
<gene>
    <name type="primary">serA</name>
    <name type="ordered locus">BSU23070</name>
</gene>
<name>SERA_BACSU</name>
<evidence type="ECO:0000250" key="1"/>
<evidence type="ECO:0000250" key="2">
    <source>
        <dbReference type="UniProtKB" id="P0A9T0"/>
    </source>
</evidence>
<evidence type="ECO:0000255" key="3">
    <source>
        <dbReference type="PROSITE-ProRule" id="PRU01007"/>
    </source>
</evidence>
<evidence type="ECO:0000305" key="4"/>
<proteinExistence type="inferred from homology"/>
<dbReference type="EC" id="1.1.1.95" evidence="2"/>
<dbReference type="EC" id="1.1.1.399" evidence="2"/>
<dbReference type="EMBL" id="L47648">
    <property type="protein sequence ID" value="AAC83943.1"/>
    <property type="molecule type" value="Genomic_DNA"/>
</dbReference>
<dbReference type="EMBL" id="AL009126">
    <property type="protein sequence ID" value="CAB14239.2"/>
    <property type="molecule type" value="Genomic_DNA"/>
</dbReference>
<dbReference type="EMBL" id="L09228">
    <property type="protein sequence ID" value="AAA67502.1"/>
    <property type="molecule type" value="Genomic_DNA"/>
</dbReference>
<dbReference type="PIR" id="C69705">
    <property type="entry name" value="C69705"/>
</dbReference>
<dbReference type="RefSeq" id="NP_390188.2">
    <property type="nucleotide sequence ID" value="NC_000964.3"/>
</dbReference>
<dbReference type="RefSeq" id="WP_004398713.1">
    <property type="nucleotide sequence ID" value="NZ_OZ025638.1"/>
</dbReference>
<dbReference type="SMR" id="P35136"/>
<dbReference type="FunCoup" id="P35136">
    <property type="interactions" value="557"/>
</dbReference>
<dbReference type="STRING" id="224308.BSU23070"/>
<dbReference type="jPOST" id="P35136"/>
<dbReference type="PaxDb" id="224308-BSU23070"/>
<dbReference type="EnsemblBacteria" id="CAB14239">
    <property type="protein sequence ID" value="CAB14239"/>
    <property type="gene ID" value="BSU_23070"/>
</dbReference>
<dbReference type="GeneID" id="938964"/>
<dbReference type="KEGG" id="bsu:BSU23070"/>
<dbReference type="PATRIC" id="fig|224308.179.peg.2514"/>
<dbReference type="eggNOG" id="COG0111">
    <property type="taxonomic scope" value="Bacteria"/>
</dbReference>
<dbReference type="InParanoid" id="P35136"/>
<dbReference type="OrthoDB" id="9805416at2"/>
<dbReference type="PhylomeDB" id="P35136"/>
<dbReference type="BioCyc" id="BSUB:BSU23070-MONOMER"/>
<dbReference type="UniPathway" id="UPA00135">
    <property type="reaction ID" value="UER00196"/>
</dbReference>
<dbReference type="Proteomes" id="UP000001570">
    <property type="component" value="Chromosome"/>
</dbReference>
<dbReference type="GO" id="GO:0051287">
    <property type="term" value="F:NAD binding"/>
    <property type="evidence" value="ECO:0007669"/>
    <property type="project" value="InterPro"/>
</dbReference>
<dbReference type="GO" id="GO:0004617">
    <property type="term" value="F:phosphoglycerate dehydrogenase activity"/>
    <property type="evidence" value="ECO:0000318"/>
    <property type="project" value="GO_Central"/>
</dbReference>
<dbReference type="GO" id="GO:0006564">
    <property type="term" value="P:L-serine biosynthetic process"/>
    <property type="evidence" value="ECO:0000318"/>
    <property type="project" value="GO_Central"/>
</dbReference>
<dbReference type="CDD" id="cd04902">
    <property type="entry name" value="ACT_3PGDH-xct"/>
    <property type="match status" value="1"/>
</dbReference>
<dbReference type="CDD" id="cd12173">
    <property type="entry name" value="PGDH_4"/>
    <property type="match status" value="1"/>
</dbReference>
<dbReference type="FunFam" id="3.40.50.720:FF:000021">
    <property type="entry name" value="D-3-phosphoglycerate dehydrogenase"/>
    <property type="match status" value="1"/>
</dbReference>
<dbReference type="FunFam" id="3.30.70.260:FF:000008">
    <property type="entry name" value="D-3-phosphoglycerate dehydrogenase, chloroplastic"/>
    <property type="match status" value="1"/>
</dbReference>
<dbReference type="Gene3D" id="3.30.70.260">
    <property type="match status" value="1"/>
</dbReference>
<dbReference type="Gene3D" id="3.30.1330.90">
    <property type="entry name" value="D-3-phosphoglycerate dehydrogenase, domain 3"/>
    <property type="match status" value="1"/>
</dbReference>
<dbReference type="Gene3D" id="3.40.50.720">
    <property type="entry name" value="NAD(P)-binding Rossmann-like Domain"/>
    <property type="match status" value="2"/>
</dbReference>
<dbReference type="InterPro" id="IPR045865">
    <property type="entry name" value="ACT-like_dom_sf"/>
</dbReference>
<dbReference type="InterPro" id="IPR002912">
    <property type="entry name" value="ACT_dom"/>
</dbReference>
<dbReference type="InterPro" id="IPR029009">
    <property type="entry name" value="ASB_dom_sf"/>
</dbReference>
<dbReference type="InterPro" id="IPR006139">
    <property type="entry name" value="D-isomer_2_OHA_DH_cat_dom"/>
</dbReference>
<dbReference type="InterPro" id="IPR029753">
    <property type="entry name" value="D-isomer_DH_CS"/>
</dbReference>
<dbReference type="InterPro" id="IPR029752">
    <property type="entry name" value="D-isomer_DH_CS1"/>
</dbReference>
<dbReference type="InterPro" id="IPR006140">
    <property type="entry name" value="D-isomer_DH_NAD-bd"/>
</dbReference>
<dbReference type="InterPro" id="IPR036291">
    <property type="entry name" value="NAD(P)-bd_dom_sf"/>
</dbReference>
<dbReference type="InterPro" id="IPR006236">
    <property type="entry name" value="PGDH"/>
</dbReference>
<dbReference type="InterPro" id="IPR045626">
    <property type="entry name" value="PGDH_ASB_dom"/>
</dbReference>
<dbReference type="NCBIfam" id="TIGR01327">
    <property type="entry name" value="PGDH"/>
    <property type="match status" value="1"/>
</dbReference>
<dbReference type="PANTHER" id="PTHR42938">
    <property type="entry name" value="FORMATE DEHYDROGENASE 1"/>
    <property type="match status" value="1"/>
</dbReference>
<dbReference type="PANTHER" id="PTHR42938:SF47">
    <property type="entry name" value="HYDROXYPYRUVATE REDUCTASE"/>
    <property type="match status" value="1"/>
</dbReference>
<dbReference type="Pfam" id="PF00389">
    <property type="entry name" value="2-Hacid_dh"/>
    <property type="match status" value="1"/>
</dbReference>
<dbReference type="Pfam" id="PF02826">
    <property type="entry name" value="2-Hacid_dh_C"/>
    <property type="match status" value="1"/>
</dbReference>
<dbReference type="Pfam" id="PF01842">
    <property type="entry name" value="ACT"/>
    <property type="match status" value="1"/>
</dbReference>
<dbReference type="Pfam" id="PF19304">
    <property type="entry name" value="PGDH_inter"/>
    <property type="match status" value="1"/>
</dbReference>
<dbReference type="SUPFAM" id="SSF55021">
    <property type="entry name" value="ACT-like"/>
    <property type="match status" value="1"/>
</dbReference>
<dbReference type="SUPFAM" id="SSF52283">
    <property type="entry name" value="Formate/glycerate dehydrogenase catalytic domain-like"/>
    <property type="match status" value="1"/>
</dbReference>
<dbReference type="SUPFAM" id="SSF51735">
    <property type="entry name" value="NAD(P)-binding Rossmann-fold domains"/>
    <property type="match status" value="1"/>
</dbReference>
<dbReference type="SUPFAM" id="SSF143548">
    <property type="entry name" value="Serine metabolism enzymes domain"/>
    <property type="match status" value="1"/>
</dbReference>
<dbReference type="PROSITE" id="PS51671">
    <property type="entry name" value="ACT"/>
    <property type="match status" value="1"/>
</dbReference>
<dbReference type="PROSITE" id="PS00065">
    <property type="entry name" value="D_2_HYDROXYACID_DH_1"/>
    <property type="match status" value="1"/>
</dbReference>
<dbReference type="PROSITE" id="PS00670">
    <property type="entry name" value="D_2_HYDROXYACID_DH_2"/>
    <property type="match status" value="1"/>
</dbReference>
<dbReference type="PROSITE" id="PS00671">
    <property type="entry name" value="D_2_HYDROXYACID_DH_3"/>
    <property type="match status" value="1"/>
</dbReference>
<comment type="function">
    <text evidence="2">Catalyzes the reversible oxidation of 3-phospho-D-glycerate to 3-phosphonooxypyruvate, the first step of the phosphorylated L-serine biosynthesis pathway. Also catalyzes the reversible oxidation of 2-hydroxyglutarate to 2-oxoglutarate.</text>
</comment>
<comment type="catalytic activity">
    <reaction evidence="2">
        <text>(2R)-3-phosphoglycerate + NAD(+) = 3-phosphooxypyruvate + NADH + H(+)</text>
        <dbReference type="Rhea" id="RHEA:12641"/>
        <dbReference type="ChEBI" id="CHEBI:15378"/>
        <dbReference type="ChEBI" id="CHEBI:18110"/>
        <dbReference type="ChEBI" id="CHEBI:57540"/>
        <dbReference type="ChEBI" id="CHEBI:57945"/>
        <dbReference type="ChEBI" id="CHEBI:58272"/>
        <dbReference type="EC" id="1.1.1.95"/>
    </reaction>
</comment>
<comment type="catalytic activity">
    <reaction evidence="2">
        <text>(R)-2-hydroxyglutarate + NAD(+) = 2-oxoglutarate + NADH + H(+)</text>
        <dbReference type="Rhea" id="RHEA:49612"/>
        <dbReference type="ChEBI" id="CHEBI:15378"/>
        <dbReference type="ChEBI" id="CHEBI:15801"/>
        <dbReference type="ChEBI" id="CHEBI:16810"/>
        <dbReference type="ChEBI" id="CHEBI:57540"/>
        <dbReference type="ChEBI" id="CHEBI:57945"/>
        <dbReference type="EC" id="1.1.1.399"/>
    </reaction>
</comment>
<comment type="activity regulation">
    <text>In bacteria displays feedback inhibition by L-serine.</text>
</comment>
<comment type="pathway">
    <text>Amino-acid biosynthesis; L-serine biosynthesis; L-serine from 3-phospho-D-glycerate: step 1/3.</text>
</comment>
<comment type="similarity">
    <text evidence="4">Belongs to the D-isomer specific 2-hydroxyacid dehydrogenase family.</text>
</comment>
<sequence>MFRVLVSDKMSNDGLQPLIESDFIEIVQKNVADAEDELHTFDALLVRSATKVTEDLFNKMTSLKIVGRAGVGVDNIDIDEATKHGVIVINAPNGNTISTAEHTFAMISSLMRHIPQANISVKSREWNRTAYVGSELYGKTLGIVGLGRIGSEIAQRARAFGMTVHVFDPFLTEERAKKIGVNSRTFEEVLESADIITVHTPLTKETKGLLNKETIAKTKKGVRLINCARGGIIDEAALLEALENGHVAGAALDVFEVEPPVDNKLVDHPLVIATPHLGASTKEAQLNVAAQVSEEVLQFAKGLPVMSAINLPAMTKDEFAKIKPYHQIAGKIGSLVSQCMKEPVQDVAIQYEGTIAKLETSFITKALLSGFLKPRVDSTVNEVNAGGVAKERGISFSEKISSSESGYDNCISVKVTGDRSTFTVTATYIPHFGERIVEINGFNIDFYPTGHLVYIQHQDTTGVIGRVGRILGDNDINIATMQVGRKEKGGEAIMMLSFDRHLEDKIVKELTNVPDIVSVKLIDLP</sequence>
<accession>P35136</accession>
<accession>O32011</accession>
<protein>
    <recommendedName>
        <fullName>D-3-phosphoglycerate dehydrogenase</fullName>
        <shortName>PGDH</shortName>
        <ecNumber evidence="2">1.1.1.95</ecNumber>
    </recommendedName>
    <alternativeName>
        <fullName evidence="2">2-oxoglutarate reductase</fullName>
        <ecNumber evidence="2">1.1.1.399</ecNumber>
    </alternativeName>
</protein>